<dbReference type="EMBL" id="D88802">
    <property type="protein sequence ID" value="BAA19697.1"/>
    <property type="status" value="ALT_INIT"/>
    <property type="molecule type" value="Genomic_DNA"/>
</dbReference>
<dbReference type="EMBL" id="AL009126">
    <property type="protein sequence ID" value="CAB12392.1"/>
    <property type="molecule type" value="Genomic_DNA"/>
</dbReference>
<dbReference type="PIR" id="B69784">
    <property type="entry name" value="B69784"/>
</dbReference>
<dbReference type="RefSeq" id="NP_388454.1">
    <property type="nucleotide sequence ID" value="NC_000964.3"/>
</dbReference>
<dbReference type="RefSeq" id="WP_003244238.1">
    <property type="nucleotide sequence ID" value="NZ_OZ025638.1"/>
</dbReference>
<dbReference type="FunCoup" id="O05497">
    <property type="interactions" value="5"/>
</dbReference>
<dbReference type="STRING" id="224308.BSU05730"/>
<dbReference type="PaxDb" id="224308-BSU05730"/>
<dbReference type="DNASU" id="938019"/>
<dbReference type="EnsemblBacteria" id="CAB12392">
    <property type="protein sequence ID" value="CAB12392"/>
    <property type="gene ID" value="BSU_05730"/>
</dbReference>
<dbReference type="GeneID" id="938019"/>
<dbReference type="KEGG" id="bsu:BSU05730"/>
<dbReference type="PATRIC" id="fig|224308.179.peg.616"/>
<dbReference type="eggNOG" id="ENOG502ZWT3">
    <property type="taxonomic scope" value="Bacteria"/>
</dbReference>
<dbReference type="InParanoid" id="O05497"/>
<dbReference type="OrthoDB" id="2352213at2"/>
<dbReference type="BioCyc" id="BSUB:BSU05730-MONOMER"/>
<dbReference type="Proteomes" id="UP000001570">
    <property type="component" value="Chromosome"/>
</dbReference>
<dbReference type="InterPro" id="IPR029051">
    <property type="entry name" value="DUF4352"/>
</dbReference>
<dbReference type="InterPro" id="IPR012640">
    <property type="entry name" value="Membr_lipoprot_lipid_attach_CS"/>
</dbReference>
<dbReference type="Pfam" id="PF11611">
    <property type="entry name" value="DUF4352"/>
    <property type="match status" value="1"/>
</dbReference>
<dbReference type="Pfam" id="PF08139">
    <property type="entry name" value="LPAM_1"/>
    <property type="match status" value="1"/>
</dbReference>
<accession>O05497</accession>
<sequence>MRRILSILVFAIMLAGCSSNASTEKQHAGGEKTVKAEPQSTSSQKDSTDDYQPNSQVTDDRTLHKVGQTFSDDKGKAVLKDIKQVNKTYKIGDVELTVKEMKLIHLRPDYSMIDYFHELTHDEEFDFVKVFVDIKNTSTKKVNVAPIALMKTNTGETFDWNKDIYLEELNGELEGGAEKSGNLGFIVNASSGHAHDKAADAEKKTKEIKWIEITTSDVFDHNHKKISDAQKIKIKF</sequence>
<organism>
    <name type="scientific">Bacillus subtilis (strain 168)</name>
    <dbReference type="NCBI Taxonomy" id="224308"/>
    <lineage>
        <taxon>Bacteria</taxon>
        <taxon>Bacillati</taxon>
        <taxon>Bacillota</taxon>
        <taxon>Bacilli</taxon>
        <taxon>Bacillales</taxon>
        <taxon>Bacillaceae</taxon>
        <taxon>Bacillus</taxon>
    </lineage>
</organism>
<evidence type="ECO:0000255" key="1"/>
<evidence type="ECO:0000256" key="2">
    <source>
        <dbReference type="SAM" id="MobiDB-lite"/>
    </source>
</evidence>
<evidence type="ECO:0000305" key="3"/>
<name>YDHF_BACSU</name>
<feature type="signal peptide" evidence="1">
    <location>
        <begin position="1"/>
        <end position="23"/>
    </location>
</feature>
<feature type="chain" id="PRO_0000013695" description="Uncharacterized protein YdhF">
    <location>
        <begin position="24"/>
        <end position="236"/>
    </location>
</feature>
<feature type="region of interest" description="Disordered" evidence="2">
    <location>
        <begin position="22"/>
        <end position="62"/>
    </location>
</feature>
<feature type="compositionally biased region" description="Basic and acidic residues" evidence="2">
    <location>
        <begin position="24"/>
        <end position="35"/>
    </location>
</feature>
<comment type="sequence caution" evidence="3">
    <conflict type="erroneous initiation">
        <sequence resource="EMBL-CDS" id="BAA19697"/>
    </conflict>
</comment>
<keyword id="KW-1185">Reference proteome</keyword>
<keyword id="KW-0732">Signal</keyword>
<protein>
    <recommendedName>
        <fullName>Uncharacterized protein YdhF</fullName>
    </recommendedName>
</protein>
<gene>
    <name type="primary">ydhF</name>
    <name type="ordered locus">BSU05730</name>
</gene>
<reference key="1">
    <citation type="journal article" date="1997" name="Microbiology">
        <title>Nucleotide sequence and analysis of the phoB-rrnE-groESL region of the Bacillus subtilis chromosome.</title>
        <authorList>
            <person name="Sadaie Y."/>
            <person name="Yata K."/>
            <person name="Fujita M."/>
            <person name="Sagai H."/>
            <person name="Itaya M."/>
            <person name="Kasahara Y."/>
            <person name="Ogasawara N."/>
        </authorList>
    </citation>
    <scope>NUCLEOTIDE SEQUENCE [GENOMIC DNA]</scope>
    <source>
        <strain>168 / JH642</strain>
    </source>
</reference>
<reference key="2">
    <citation type="journal article" date="1997" name="Nature">
        <title>The complete genome sequence of the Gram-positive bacterium Bacillus subtilis.</title>
        <authorList>
            <person name="Kunst F."/>
            <person name="Ogasawara N."/>
            <person name="Moszer I."/>
            <person name="Albertini A.M."/>
            <person name="Alloni G."/>
            <person name="Azevedo V."/>
            <person name="Bertero M.G."/>
            <person name="Bessieres P."/>
            <person name="Bolotin A."/>
            <person name="Borchert S."/>
            <person name="Borriss R."/>
            <person name="Boursier L."/>
            <person name="Brans A."/>
            <person name="Braun M."/>
            <person name="Brignell S.C."/>
            <person name="Bron S."/>
            <person name="Brouillet S."/>
            <person name="Bruschi C.V."/>
            <person name="Caldwell B."/>
            <person name="Capuano V."/>
            <person name="Carter N.M."/>
            <person name="Choi S.-K."/>
            <person name="Codani J.-J."/>
            <person name="Connerton I.F."/>
            <person name="Cummings N.J."/>
            <person name="Daniel R.A."/>
            <person name="Denizot F."/>
            <person name="Devine K.M."/>
            <person name="Duesterhoeft A."/>
            <person name="Ehrlich S.D."/>
            <person name="Emmerson P.T."/>
            <person name="Entian K.-D."/>
            <person name="Errington J."/>
            <person name="Fabret C."/>
            <person name="Ferrari E."/>
            <person name="Foulger D."/>
            <person name="Fritz C."/>
            <person name="Fujita M."/>
            <person name="Fujita Y."/>
            <person name="Fuma S."/>
            <person name="Galizzi A."/>
            <person name="Galleron N."/>
            <person name="Ghim S.-Y."/>
            <person name="Glaser P."/>
            <person name="Goffeau A."/>
            <person name="Golightly E.J."/>
            <person name="Grandi G."/>
            <person name="Guiseppi G."/>
            <person name="Guy B.J."/>
            <person name="Haga K."/>
            <person name="Haiech J."/>
            <person name="Harwood C.R."/>
            <person name="Henaut A."/>
            <person name="Hilbert H."/>
            <person name="Holsappel S."/>
            <person name="Hosono S."/>
            <person name="Hullo M.-F."/>
            <person name="Itaya M."/>
            <person name="Jones L.-M."/>
            <person name="Joris B."/>
            <person name="Karamata D."/>
            <person name="Kasahara Y."/>
            <person name="Klaerr-Blanchard M."/>
            <person name="Klein C."/>
            <person name="Kobayashi Y."/>
            <person name="Koetter P."/>
            <person name="Koningstein G."/>
            <person name="Krogh S."/>
            <person name="Kumano M."/>
            <person name="Kurita K."/>
            <person name="Lapidus A."/>
            <person name="Lardinois S."/>
            <person name="Lauber J."/>
            <person name="Lazarevic V."/>
            <person name="Lee S.-M."/>
            <person name="Levine A."/>
            <person name="Liu H."/>
            <person name="Masuda S."/>
            <person name="Mauel C."/>
            <person name="Medigue C."/>
            <person name="Medina N."/>
            <person name="Mellado R.P."/>
            <person name="Mizuno M."/>
            <person name="Moestl D."/>
            <person name="Nakai S."/>
            <person name="Noback M."/>
            <person name="Noone D."/>
            <person name="O'Reilly M."/>
            <person name="Ogawa K."/>
            <person name="Ogiwara A."/>
            <person name="Oudega B."/>
            <person name="Park S.-H."/>
            <person name="Parro V."/>
            <person name="Pohl T.M."/>
            <person name="Portetelle D."/>
            <person name="Porwollik S."/>
            <person name="Prescott A.M."/>
            <person name="Presecan E."/>
            <person name="Pujic P."/>
            <person name="Purnelle B."/>
            <person name="Rapoport G."/>
            <person name="Rey M."/>
            <person name="Reynolds S."/>
            <person name="Rieger M."/>
            <person name="Rivolta C."/>
            <person name="Rocha E."/>
            <person name="Roche B."/>
            <person name="Rose M."/>
            <person name="Sadaie Y."/>
            <person name="Sato T."/>
            <person name="Scanlan E."/>
            <person name="Schleich S."/>
            <person name="Schroeter R."/>
            <person name="Scoffone F."/>
            <person name="Sekiguchi J."/>
            <person name="Sekowska A."/>
            <person name="Seror S.J."/>
            <person name="Serror P."/>
            <person name="Shin B.-S."/>
            <person name="Soldo B."/>
            <person name="Sorokin A."/>
            <person name="Tacconi E."/>
            <person name="Takagi T."/>
            <person name="Takahashi H."/>
            <person name="Takemaru K."/>
            <person name="Takeuchi M."/>
            <person name="Tamakoshi A."/>
            <person name="Tanaka T."/>
            <person name="Terpstra P."/>
            <person name="Tognoni A."/>
            <person name="Tosato V."/>
            <person name="Uchiyama S."/>
            <person name="Vandenbol M."/>
            <person name="Vannier F."/>
            <person name="Vassarotti A."/>
            <person name="Viari A."/>
            <person name="Wambutt R."/>
            <person name="Wedler E."/>
            <person name="Wedler H."/>
            <person name="Weitzenegger T."/>
            <person name="Winters P."/>
            <person name="Wipat A."/>
            <person name="Yamamoto H."/>
            <person name="Yamane K."/>
            <person name="Yasumoto K."/>
            <person name="Yata K."/>
            <person name="Yoshida K."/>
            <person name="Yoshikawa H.-F."/>
            <person name="Zumstein E."/>
            <person name="Yoshikawa H."/>
            <person name="Danchin A."/>
        </authorList>
    </citation>
    <scope>NUCLEOTIDE SEQUENCE [LARGE SCALE GENOMIC DNA]</scope>
    <source>
        <strain>168</strain>
    </source>
</reference>
<proteinExistence type="inferred from homology"/>